<reference key="1">
    <citation type="journal article" date="1993" name="Gene">
        <title>Analysis of tandem, multiple genes encoding 30-kDa membrane proteins in Pasteurella haemolytica A1.</title>
        <authorList>
            <person name="Murphy G.L."/>
            <person name="Whitworth L.C."/>
        </authorList>
    </citation>
    <scope>NUCLEOTIDE SEQUENCE [GENOMIC DNA]</scope>
    <source>
        <strain>Serotype A1</strain>
    </source>
</reference>
<reference key="2">
    <citation type="journal article" date="1993" name="Infect. Immun.">
        <title>Three contiguous lipoprotein genes in Pasteurella haemolytica A1 which are homologous to a lipoprotein gene in Haemophilus influenzae type b.</title>
        <authorList>
            <person name="Cooney B.J."/>
            <person name="Lo R.Y.C."/>
        </authorList>
    </citation>
    <scope>NUCLEOTIDE SEQUENCE [GENOMIC DNA]</scope>
    <source>
        <strain>Serotype A1</strain>
    </source>
</reference>
<organism>
    <name type="scientific">Mannheimia haemolytica</name>
    <name type="common">Pasteurella haemolytica</name>
    <dbReference type="NCBI Taxonomy" id="75985"/>
    <lineage>
        <taxon>Bacteria</taxon>
        <taxon>Pseudomonadati</taxon>
        <taxon>Pseudomonadota</taxon>
        <taxon>Gammaproteobacteria</taxon>
        <taxon>Pasteurellales</taxon>
        <taxon>Pasteurellaceae</taxon>
        <taxon>Mannheimia</taxon>
    </lineage>
</organism>
<dbReference type="EMBL" id="L11037">
    <property type="protein sequence ID" value="AAA25540.1"/>
    <property type="molecule type" value="Genomic_DNA"/>
</dbReference>
<dbReference type="EMBL" id="L16627">
    <property type="protein sequence ID" value="AAA25548.1"/>
    <property type="status" value="ALT_INIT"/>
    <property type="molecule type" value="Genomic_DNA"/>
</dbReference>
<dbReference type="PIR" id="JN0753">
    <property type="entry name" value="JN0753"/>
</dbReference>
<dbReference type="SMR" id="Q08870"/>
<dbReference type="STRING" id="75985.WC39_10130"/>
<dbReference type="OrthoDB" id="9812878at2"/>
<dbReference type="GO" id="GO:0009279">
    <property type="term" value="C:cell outer membrane"/>
    <property type="evidence" value="ECO:0007669"/>
    <property type="project" value="UniProtKB-SubCell"/>
</dbReference>
<dbReference type="CDD" id="cd13598">
    <property type="entry name" value="PBP2_lipoprotein_IlpA_like"/>
    <property type="match status" value="1"/>
</dbReference>
<dbReference type="Gene3D" id="3.40.190.10">
    <property type="entry name" value="Periplasmic binding protein-like II"/>
    <property type="match status" value="2"/>
</dbReference>
<dbReference type="InterPro" id="IPR004872">
    <property type="entry name" value="Lipoprotein_NlpA"/>
</dbReference>
<dbReference type="NCBIfam" id="TIGR00363">
    <property type="entry name" value="MetQ/NlpA family lipoprotein"/>
    <property type="match status" value="1"/>
</dbReference>
<dbReference type="NCBIfam" id="NF008285">
    <property type="entry name" value="PRK11063.1"/>
    <property type="match status" value="1"/>
</dbReference>
<dbReference type="PANTHER" id="PTHR30429">
    <property type="entry name" value="D-METHIONINE-BINDING LIPOPROTEIN METQ"/>
    <property type="match status" value="1"/>
</dbReference>
<dbReference type="PANTHER" id="PTHR30429:SF1">
    <property type="entry name" value="D-METHIONINE-BINDING LIPOPROTEIN METQ-RELATED"/>
    <property type="match status" value="1"/>
</dbReference>
<dbReference type="Pfam" id="PF03180">
    <property type="entry name" value="Lipoprotein_9"/>
    <property type="match status" value="1"/>
</dbReference>
<dbReference type="PIRSF" id="PIRSF002854">
    <property type="entry name" value="MetQ"/>
    <property type="match status" value="1"/>
</dbReference>
<dbReference type="SUPFAM" id="SSF53850">
    <property type="entry name" value="Periplasmic binding protein-like II"/>
    <property type="match status" value="1"/>
</dbReference>
<dbReference type="PROSITE" id="PS51257">
    <property type="entry name" value="PROKAR_LIPOPROTEIN"/>
    <property type="match status" value="1"/>
</dbReference>
<gene>
    <name type="primary">plpC</name>
</gene>
<sequence length="263" mass="29094">MKIMKLAGAVAIFSLFLTACNDKAEKLKVGVISGPEHKVMEVAAKIAKEKYNRDVELVVFTDYATPNAALDKGDLDLNAFQHKPYLDNQIQEKGYKLVPVGNTFVYPIAAYSKKIKSLAELKDGDTIAVPNDPTNLARALILLEKQDLIKLRADAGLKATSVDIIENPRKLVIQEIEAPLLPRTLDDVAFSIINTTYAGQNGLTPTKDGIFVEDKDSPYVNLIVARENNQHSEAVKDLVKAYQTEEVYNKANEEFKGAMIKGW</sequence>
<comment type="subcellular location">
    <subcellularLocation>
        <location evidence="2">Cell outer membrane</location>
        <topology evidence="2">Lipid-anchor</topology>
    </subcellularLocation>
</comment>
<comment type="similarity">
    <text evidence="2">Belongs to the NlpA lipoprotein family.</text>
</comment>
<comment type="sequence caution" evidence="2">
    <conflict type="erroneous initiation">
        <sequence resource="EMBL-CDS" id="AAA25548"/>
    </conflict>
</comment>
<protein>
    <recommendedName>
        <fullName>Outer membrane lipoprotein 3</fullName>
    </recommendedName>
    <alternativeName>
        <fullName>PLP3</fullName>
    </alternativeName>
</protein>
<proteinExistence type="inferred from homology"/>
<evidence type="ECO:0000255" key="1">
    <source>
        <dbReference type="PROSITE-ProRule" id="PRU00303"/>
    </source>
</evidence>
<evidence type="ECO:0000305" key="2"/>
<name>PLPC_MANHA</name>
<keyword id="KW-0998">Cell outer membrane</keyword>
<keyword id="KW-0449">Lipoprotein</keyword>
<keyword id="KW-0472">Membrane</keyword>
<keyword id="KW-0564">Palmitate</keyword>
<keyword id="KW-0732">Signal</keyword>
<feature type="signal peptide" evidence="1">
    <location>
        <begin position="1"/>
        <end position="19"/>
    </location>
</feature>
<feature type="chain" id="PRO_0000019749" description="Outer membrane lipoprotein 3">
    <location>
        <begin position="20"/>
        <end position="263"/>
    </location>
</feature>
<feature type="lipid moiety-binding region" description="N-palmitoyl cysteine" evidence="2">
    <location>
        <position position="20"/>
    </location>
</feature>
<feature type="lipid moiety-binding region" description="S-diacylglycerol cysteine" evidence="2">
    <location>
        <position position="20"/>
    </location>
</feature>
<feature type="sequence conflict" description="In Ref. 2; AAA25548." evidence="2" ref="2">
    <original>T</original>
    <variation>S</variation>
    <location>
        <position position="103"/>
    </location>
</feature>
<feature type="sequence conflict" description="In Ref. 2; AAA25548." evidence="2" ref="2">
    <original>QNGLTPTKD</original>
    <variation>KTVNANQS</variation>
    <location>
        <begin position="200"/>
        <end position="208"/>
    </location>
</feature>
<accession>Q08870</accession>
<accession>Q07365</accession>